<feature type="chain" id="PRO_0000173734" description="Agmatinase">
    <location>
        <begin position="1"/>
        <end position="307"/>
    </location>
</feature>
<feature type="binding site" evidence="1">
    <location>
        <position position="128"/>
    </location>
    <ligand>
        <name>Mn(2+)</name>
        <dbReference type="ChEBI" id="CHEBI:29035"/>
    </ligand>
</feature>
<feature type="binding site" evidence="1">
    <location>
        <position position="151"/>
    </location>
    <ligand>
        <name>Mn(2+)</name>
        <dbReference type="ChEBI" id="CHEBI:29035"/>
    </ligand>
</feature>
<feature type="binding site" evidence="1">
    <location>
        <position position="153"/>
    </location>
    <ligand>
        <name>Mn(2+)</name>
        <dbReference type="ChEBI" id="CHEBI:29035"/>
    </ligand>
</feature>
<feature type="binding site" evidence="1">
    <location>
        <position position="155"/>
    </location>
    <ligand>
        <name>Mn(2+)</name>
        <dbReference type="ChEBI" id="CHEBI:29035"/>
    </ligand>
</feature>
<feature type="binding site" evidence="1">
    <location>
        <position position="232"/>
    </location>
    <ligand>
        <name>Mn(2+)</name>
        <dbReference type="ChEBI" id="CHEBI:29035"/>
    </ligand>
</feature>
<feature type="binding site" evidence="1">
    <location>
        <position position="234"/>
    </location>
    <ligand>
        <name>Mn(2+)</name>
        <dbReference type="ChEBI" id="CHEBI:29035"/>
    </ligand>
</feature>
<proteinExistence type="inferred from homology"/>
<accession>Q5F6R3</accession>
<organism>
    <name type="scientific">Neisseria gonorrhoeae (strain ATCC 700825 / FA 1090)</name>
    <dbReference type="NCBI Taxonomy" id="242231"/>
    <lineage>
        <taxon>Bacteria</taxon>
        <taxon>Pseudomonadati</taxon>
        <taxon>Pseudomonadota</taxon>
        <taxon>Betaproteobacteria</taxon>
        <taxon>Neisseriales</taxon>
        <taxon>Neisseriaceae</taxon>
        <taxon>Neisseria</taxon>
    </lineage>
</organism>
<dbReference type="EC" id="3.5.3.11" evidence="1"/>
<dbReference type="EMBL" id="AE004969">
    <property type="protein sequence ID" value="AAW90124.1"/>
    <property type="molecule type" value="Genomic_DNA"/>
</dbReference>
<dbReference type="RefSeq" id="WP_003689368.1">
    <property type="nucleotide sequence ID" value="NC_002946.2"/>
</dbReference>
<dbReference type="RefSeq" id="YP_208536.1">
    <property type="nucleotide sequence ID" value="NC_002946.2"/>
</dbReference>
<dbReference type="SMR" id="Q5F6R3"/>
<dbReference type="STRING" id="242231.NGO_1486"/>
<dbReference type="GeneID" id="66753689"/>
<dbReference type="KEGG" id="ngo:NGO_1486"/>
<dbReference type="PATRIC" id="fig|242231.10.peg.1759"/>
<dbReference type="HOGENOM" id="CLU_039478_0_0_4"/>
<dbReference type="UniPathway" id="UPA00534">
    <property type="reaction ID" value="UER00287"/>
</dbReference>
<dbReference type="Proteomes" id="UP000000535">
    <property type="component" value="Chromosome"/>
</dbReference>
<dbReference type="GO" id="GO:0008783">
    <property type="term" value="F:agmatinase activity"/>
    <property type="evidence" value="ECO:0007669"/>
    <property type="project" value="UniProtKB-UniRule"/>
</dbReference>
<dbReference type="GO" id="GO:0030145">
    <property type="term" value="F:manganese ion binding"/>
    <property type="evidence" value="ECO:0007669"/>
    <property type="project" value="InterPro"/>
</dbReference>
<dbReference type="GO" id="GO:0033389">
    <property type="term" value="P:putrescine biosynthetic process from arginine, via agmatine"/>
    <property type="evidence" value="ECO:0007669"/>
    <property type="project" value="TreeGrafter"/>
</dbReference>
<dbReference type="GO" id="GO:0008295">
    <property type="term" value="P:spermidine biosynthetic process"/>
    <property type="evidence" value="ECO:0007669"/>
    <property type="project" value="UniProtKB-UniRule"/>
</dbReference>
<dbReference type="CDD" id="cd11592">
    <property type="entry name" value="Agmatinase_PAH"/>
    <property type="match status" value="1"/>
</dbReference>
<dbReference type="FunFam" id="3.40.800.10:FF:000001">
    <property type="entry name" value="Agmatinase"/>
    <property type="match status" value="1"/>
</dbReference>
<dbReference type="Gene3D" id="3.40.800.10">
    <property type="entry name" value="Ureohydrolase domain"/>
    <property type="match status" value="1"/>
</dbReference>
<dbReference type="HAMAP" id="MF_01418">
    <property type="entry name" value="SpeB"/>
    <property type="match status" value="1"/>
</dbReference>
<dbReference type="InterPro" id="IPR023694">
    <property type="entry name" value="Agmatinase"/>
</dbReference>
<dbReference type="InterPro" id="IPR005925">
    <property type="entry name" value="Agmatinase-rel"/>
</dbReference>
<dbReference type="InterPro" id="IPR006035">
    <property type="entry name" value="Ureohydrolase"/>
</dbReference>
<dbReference type="InterPro" id="IPR023696">
    <property type="entry name" value="Ureohydrolase_dom_sf"/>
</dbReference>
<dbReference type="InterPro" id="IPR020855">
    <property type="entry name" value="Ureohydrolase_Mn_BS"/>
</dbReference>
<dbReference type="NCBIfam" id="TIGR01230">
    <property type="entry name" value="agmatinase"/>
    <property type="match status" value="1"/>
</dbReference>
<dbReference type="NCBIfam" id="NF002564">
    <property type="entry name" value="PRK02190.1"/>
    <property type="match status" value="1"/>
</dbReference>
<dbReference type="PANTHER" id="PTHR11358">
    <property type="entry name" value="ARGINASE/AGMATINASE"/>
    <property type="match status" value="1"/>
</dbReference>
<dbReference type="PANTHER" id="PTHR11358:SF26">
    <property type="entry name" value="GUANIDINO ACID HYDROLASE, MITOCHONDRIAL"/>
    <property type="match status" value="1"/>
</dbReference>
<dbReference type="Pfam" id="PF00491">
    <property type="entry name" value="Arginase"/>
    <property type="match status" value="1"/>
</dbReference>
<dbReference type="PIRSF" id="PIRSF036979">
    <property type="entry name" value="Arginase"/>
    <property type="match status" value="1"/>
</dbReference>
<dbReference type="SUPFAM" id="SSF52768">
    <property type="entry name" value="Arginase/deacetylase"/>
    <property type="match status" value="1"/>
</dbReference>
<dbReference type="PROSITE" id="PS01053">
    <property type="entry name" value="ARGINASE_1"/>
    <property type="match status" value="1"/>
</dbReference>
<dbReference type="PROSITE" id="PS51409">
    <property type="entry name" value="ARGINASE_2"/>
    <property type="match status" value="1"/>
</dbReference>
<sequence length="307" mass="33966">MQYSTLAGQTDNSLVSNNFGFLRLPLNFMPYESHADWVITGVPYDMAVSGRSGARFGPEAIRRASVNLAWEHRRFPWTFDVRERLNIIDCGDLVFSFGDSRDFVEKMEAHAGKLLSFGKRCLSLGGDHFITLPLLRAHARYFGKLALIHFDAHTDTYDNGSEYDHGTMFYTAPKEGLIDPSRSVQIGIRTEHSKKLPFTVLSAPKVNEDSVEETVRKIKETVGNMPVYLTFDIDCLDPSFAPGTGTPVCGGLSSDRALKILRGLTDLDIVGMDVVEVAPSYDQSDITALAGATIALEMLYLQGAKKD</sequence>
<reference key="1">
    <citation type="submission" date="2003-03" db="EMBL/GenBank/DDBJ databases">
        <title>The complete genome sequence of Neisseria gonorrhoeae.</title>
        <authorList>
            <person name="Lewis L.A."/>
            <person name="Gillaspy A.F."/>
            <person name="McLaughlin R.E."/>
            <person name="Gipson M."/>
            <person name="Ducey T.F."/>
            <person name="Ownbey T."/>
            <person name="Hartman K."/>
            <person name="Nydick C."/>
            <person name="Carson M.B."/>
            <person name="Vaughn J."/>
            <person name="Thomson C."/>
            <person name="Song L."/>
            <person name="Lin S."/>
            <person name="Yuan X."/>
            <person name="Najar F."/>
            <person name="Zhan M."/>
            <person name="Ren Q."/>
            <person name="Zhu H."/>
            <person name="Qi S."/>
            <person name="Kenton S.M."/>
            <person name="Lai H."/>
            <person name="White J.D."/>
            <person name="Clifton S."/>
            <person name="Roe B.A."/>
            <person name="Dyer D.W."/>
        </authorList>
    </citation>
    <scope>NUCLEOTIDE SEQUENCE [LARGE SCALE GENOMIC DNA]</scope>
    <source>
        <strain>ATCC 700825 / FA 1090</strain>
    </source>
</reference>
<evidence type="ECO:0000255" key="1">
    <source>
        <dbReference type="HAMAP-Rule" id="MF_01418"/>
    </source>
</evidence>
<gene>
    <name evidence="1" type="primary">speB</name>
    <name type="ordered locus">NGO_1486</name>
</gene>
<name>SPEB_NEIG1</name>
<keyword id="KW-0378">Hydrolase</keyword>
<keyword id="KW-0464">Manganese</keyword>
<keyword id="KW-0479">Metal-binding</keyword>
<keyword id="KW-0620">Polyamine biosynthesis</keyword>
<keyword id="KW-0661">Putrescine biosynthesis</keyword>
<keyword id="KW-1185">Reference proteome</keyword>
<keyword id="KW-0745">Spermidine biosynthesis</keyword>
<comment type="function">
    <text evidence="1">Catalyzes the formation of putrescine from agmatine.</text>
</comment>
<comment type="catalytic activity">
    <reaction evidence="1">
        <text>agmatine + H2O = urea + putrescine</text>
        <dbReference type="Rhea" id="RHEA:13929"/>
        <dbReference type="ChEBI" id="CHEBI:15377"/>
        <dbReference type="ChEBI" id="CHEBI:16199"/>
        <dbReference type="ChEBI" id="CHEBI:58145"/>
        <dbReference type="ChEBI" id="CHEBI:326268"/>
        <dbReference type="EC" id="3.5.3.11"/>
    </reaction>
</comment>
<comment type="cofactor">
    <cofactor evidence="1">
        <name>Mn(2+)</name>
        <dbReference type="ChEBI" id="CHEBI:29035"/>
    </cofactor>
</comment>
<comment type="pathway">
    <text evidence="1">Amine and polyamine biosynthesis; putrescine biosynthesis via agmatine pathway; putrescine from agmatine: step 1/1.</text>
</comment>
<comment type="similarity">
    <text evidence="1">Belongs to the arginase family. Agmatinase subfamily.</text>
</comment>
<protein>
    <recommendedName>
        <fullName evidence="1">Agmatinase</fullName>
        <ecNumber evidence="1">3.5.3.11</ecNumber>
    </recommendedName>
    <alternativeName>
        <fullName evidence="1">Agmatine ureohydrolase</fullName>
        <shortName evidence="1">AUH</shortName>
    </alternativeName>
</protein>